<reference key="1">
    <citation type="journal article" date="2008" name="PLoS ONE">
        <title>Genome sequence of Brucella abortus vaccine strain S19 compared to virulent strains yields candidate virulence genes.</title>
        <authorList>
            <person name="Crasta O.R."/>
            <person name="Folkerts O."/>
            <person name="Fei Z."/>
            <person name="Mane S.P."/>
            <person name="Evans C."/>
            <person name="Martino-Catt S."/>
            <person name="Bricker B."/>
            <person name="Yu G."/>
            <person name="Du L."/>
            <person name="Sobral B.W."/>
        </authorList>
    </citation>
    <scope>NUCLEOTIDE SEQUENCE [LARGE SCALE GENOMIC DNA]</scope>
    <source>
        <strain>S19</strain>
    </source>
</reference>
<sequence length="130" mass="14562">MYSAVTRGIEVTVEPFYLEVQSEPEENRYVWGYRVTIVNNSSETVQLCSRYWQITDANGHVQEVRGSGVVGKQPVLDPGDSYQYSSGCPLTTSSGVMVGRYQMKGEDGAQFEIEIPAFSLDVPEQRRTLN</sequence>
<proteinExistence type="inferred from homology"/>
<protein>
    <recommendedName>
        <fullName evidence="1">Protein ApaG</fullName>
    </recommendedName>
</protein>
<name>APAG_BRUA1</name>
<evidence type="ECO:0000255" key="1">
    <source>
        <dbReference type="HAMAP-Rule" id="MF_00791"/>
    </source>
</evidence>
<gene>
    <name evidence="1" type="primary">apaG</name>
    <name type="ordered locus">BAbS19_I03040</name>
</gene>
<feature type="chain" id="PRO_1000133782" description="Protein ApaG">
    <location>
        <begin position="1"/>
        <end position="130"/>
    </location>
</feature>
<feature type="domain" description="ApaG" evidence="1">
    <location>
        <begin position="3"/>
        <end position="127"/>
    </location>
</feature>
<dbReference type="EMBL" id="CP000887">
    <property type="protein sequence ID" value="ACD71845.1"/>
    <property type="molecule type" value="Genomic_DNA"/>
</dbReference>
<dbReference type="RefSeq" id="WP_002963468.1">
    <property type="nucleotide sequence ID" value="NC_010742.1"/>
</dbReference>
<dbReference type="SMR" id="B2S946"/>
<dbReference type="GeneID" id="93017229"/>
<dbReference type="KEGG" id="bmc:BAbS19_I03040"/>
<dbReference type="HOGENOM" id="CLU_128074_1_0_5"/>
<dbReference type="Proteomes" id="UP000002565">
    <property type="component" value="Chromosome 1"/>
</dbReference>
<dbReference type="GO" id="GO:0070987">
    <property type="term" value="P:error-free translesion synthesis"/>
    <property type="evidence" value="ECO:0007669"/>
    <property type="project" value="TreeGrafter"/>
</dbReference>
<dbReference type="Gene3D" id="2.60.40.1470">
    <property type="entry name" value="ApaG domain"/>
    <property type="match status" value="1"/>
</dbReference>
<dbReference type="HAMAP" id="MF_00791">
    <property type="entry name" value="ApaG"/>
    <property type="match status" value="1"/>
</dbReference>
<dbReference type="InterPro" id="IPR007474">
    <property type="entry name" value="ApaG_domain"/>
</dbReference>
<dbReference type="InterPro" id="IPR036767">
    <property type="entry name" value="ApaG_sf"/>
</dbReference>
<dbReference type="InterPro" id="IPR023065">
    <property type="entry name" value="Uncharacterised_ApaG"/>
</dbReference>
<dbReference type="NCBIfam" id="NF003967">
    <property type="entry name" value="PRK05461.1"/>
    <property type="match status" value="1"/>
</dbReference>
<dbReference type="PANTHER" id="PTHR14289">
    <property type="entry name" value="F-BOX ONLY PROTEIN 3"/>
    <property type="match status" value="1"/>
</dbReference>
<dbReference type="PANTHER" id="PTHR14289:SF16">
    <property type="entry name" value="POLYMERASE DELTA-INTERACTING PROTEIN 2"/>
    <property type="match status" value="1"/>
</dbReference>
<dbReference type="Pfam" id="PF04379">
    <property type="entry name" value="DUF525"/>
    <property type="match status" value="1"/>
</dbReference>
<dbReference type="SUPFAM" id="SSF110069">
    <property type="entry name" value="ApaG-like"/>
    <property type="match status" value="1"/>
</dbReference>
<dbReference type="PROSITE" id="PS51087">
    <property type="entry name" value="APAG"/>
    <property type="match status" value="1"/>
</dbReference>
<accession>B2S946</accession>
<organism>
    <name type="scientific">Brucella abortus (strain S19)</name>
    <dbReference type="NCBI Taxonomy" id="430066"/>
    <lineage>
        <taxon>Bacteria</taxon>
        <taxon>Pseudomonadati</taxon>
        <taxon>Pseudomonadota</taxon>
        <taxon>Alphaproteobacteria</taxon>
        <taxon>Hyphomicrobiales</taxon>
        <taxon>Brucellaceae</taxon>
        <taxon>Brucella/Ochrobactrum group</taxon>
        <taxon>Brucella</taxon>
    </lineage>
</organism>